<accession>P0AFU4</accession>
<accession>P21712</accession>
<accession>P77512</accession>
<protein>
    <recommendedName>
        <fullName>Transcriptional regulatory protein GlrR</fullName>
    </recommendedName>
</protein>
<name>GLRR_ECOLI</name>
<sequence>MSHKPAHLLLVDDDPGLLKLLGLRLTSEGYSVVTAESGAEGLRVLNREKVDLVISDLRMDEMDGMQLFAEIQKVQPGMPVIILTAHGSIPDAVAATQQGVFSFLTKPVDKDALYQAIDDALEQSAPATDERWREAIVTRSPLMLRLLEQARLVAQSDVSVLINGQSGTGKEIFAQAIHNASPRNSKPFIAINCGALPEQLLESELFGHARGAFTGAVSNREGLFQAAEGGTLFLDEIGDMPAPLQVKLLRVLQERKVRPLGSNRDIDINVRIISATHRDLPKAMARGEFREDLYYRLNVVSLKIPALAERTEDIPLLANHLLRQAAERHKPFVRAFSTDAMKRLMTASWPGNVRQLVNVIEQCVALTSSPVISDALVEQALEGENTALPTFVEARNQFELNYLRKLLQITKGNVTHAARMAGRNRTEFYKLLSRHELDANDFKE</sequence>
<reference key="1">
    <citation type="journal article" date="1993" name="J. Bacteriol.">
        <title>The glnB region of the Escherichia coli chromosome.</title>
        <authorList>
            <person name="Liu J."/>
            <person name="Magasanik B."/>
        </authorList>
    </citation>
    <scope>NUCLEOTIDE SEQUENCE [GENOMIC DNA]</scope>
</reference>
<reference key="2">
    <citation type="journal article" date="1997" name="DNA Res.">
        <title>Construction of a contiguous 874-kb sequence of the Escherichia coli-K12 genome corresponding to 50.0-68.8 min on the linkage map and analysis of its sequence features.</title>
        <authorList>
            <person name="Yamamoto Y."/>
            <person name="Aiba H."/>
            <person name="Baba T."/>
            <person name="Hayashi K."/>
            <person name="Inada T."/>
            <person name="Isono K."/>
            <person name="Itoh T."/>
            <person name="Kimura S."/>
            <person name="Kitagawa M."/>
            <person name="Makino K."/>
            <person name="Miki T."/>
            <person name="Mitsuhashi N."/>
            <person name="Mizobuchi K."/>
            <person name="Mori H."/>
            <person name="Nakade S."/>
            <person name="Nakamura Y."/>
            <person name="Nashimoto H."/>
            <person name="Oshima T."/>
            <person name="Oyama S."/>
            <person name="Saito N."/>
            <person name="Sampei G."/>
            <person name="Satoh Y."/>
            <person name="Sivasundaram S."/>
            <person name="Tagami H."/>
            <person name="Takahashi H."/>
            <person name="Takeda J."/>
            <person name="Takemoto K."/>
            <person name="Uehara K."/>
            <person name="Wada C."/>
            <person name="Yamagata S."/>
            <person name="Horiuchi T."/>
        </authorList>
    </citation>
    <scope>NUCLEOTIDE SEQUENCE [LARGE SCALE GENOMIC DNA]</scope>
    <source>
        <strain>K12 / W3110 / ATCC 27325 / DSM 5911</strain>
    </source>
</reference>
<reference key="3">
    <citation type="journal article" date="1997" name="Science">
        <title>The complete genome sequence of Escherichia coli K-12.</title>
        <authorList>
            <person name="Blattner F.R."/>
            <person name="Plunkett G. III"/>
            <person name="Bloch C.A."/>
            <person name="Perna N.T."/>
            <person name="Burland V."/>
            <person name="Riley M."/>
            <person name="Collado-Vides J."/>
            <person name="Glasner J.D."/>
            <person name="Rode C.K."/>
            <person name="Mayhew G.F."/>
            <person name="Gregor J."/>
            <person name="Davis N.W."/>
            <person name="Kirkpatrick H.A."/>
            <person name="Goeden M.A."/>
            <person name="Rose D.J."/>
            <person name="Mau B."/>
            <person name="Shao Y."/>
        </authorList>
    </citation>
    <scope>NUCLEOTIDE SEQUENCE [LARGE SCALE GENOMIC DNA]</scope>
    <source>
        <strain>K12 / MG1655 / ATCC 47076</strain>
    </source>
</reference>
<reference key="4">
    <citation type="journal article" date="2006" name="Mol. Syst. Biol.">
        <title>Highly accurate genome sequences of Escherichia coli K-12 strains MG1655 and W3110.</title>
        <authorList>
            <person name="Hayashi K."/>
            <person name="Morooka N."/>
            <person name="Yamamoto Y."/>
            <person name="Fujita K."/>
            <person name="Isono K."/>
            <person name="Choi S."/>
            <person name="Ohtsubo E."/>
            <person name="Baba T."/>
            <person name="Wanner B.L."/>
            <person name="Mori H."/>
            <person name="Horiuchi T."/>
        </authorList>
    </citation>
    <scope>NUCLEOTIDE SEQUENCE [LARGE SCALE GENOMIC DNA]</scope>
    <source>
        <strain>K12 / W3110 / ATCC 27325 / DSM 5911</strain>
    </source>
</reference>
<reference key="5">
    <citation type="journal article" date="1993" name="Mol. Microbiol.">
        <title>The genes of the glutamine synthetase adenylylation cascade are not regulated by nitrogen in Escherichia coli.</title>
        <authorList>
            <person name="van Heeswijk W.C."/>
            <person name="Rabenberg M."/>
            <person name="Westerhoff H.V."/>
            <person name="Kahn D.D."/>
        </authorList>
    </citation>
    <scope>NUCLEOTIDE SEQUENCE [GENOMIC DNA] OF 288-444</scope>
    <source>
        <strain>K12 / W3110 / ATCC 27325 / DSM 5911</strain>
    </source>
</reference>
<reference key="6">
    <citation type="journal article" date="1991" name="Mol. Gen. Genet.">
        <title>Isolation and nucleotide sequence of the hmp gene that encodes a haemoglobin-like protein in Escherichia coli K-12.</title>
        <authorList>
            <person name="Vasudevan S.G."/>
            <person name="Armarego W.L.F."/>
            <person name="Shaw D.C."/>
            <person name="Lilley P.E."/>
            <person name="Dixon N.E."/>
            <person name="Poole R.K."/>
        </authorList>
    </citation>
    <scope>NUCLEOTIDE SEQUENCE [GENOMIC DNA] OF 404-444</scope>
    <source>
        <strain>K12</strain>
    </source>
</reference>
<reference key="7">
    <citation type="journal article" date="1987" name="J. Biol. Chem.">
        <title>Cascade control of Escherichia coli glutamine synthetase. Purification and properties of PII protein and nucleotide sequence of its structural gene.</title>
        <authorList>
            <person name="Son H.S."/>
            <person name="Rhee S.G."/>
        </authorList>
    </citation>
    <scope>NUCLEOTIDE SEQUENCE [GENOMIC DNA] OF 419-444</scope>
</reference>
<reference key="8">
    <citation type="journal article" date="2005" name="J. Biol. Chem.">
        <title>Functional characterization in vitro of all two-component signal transduction systems from Escherichia coli.</title>
        <authorList>
            <person name="Yamamoto K."/>
            <person name="Hirao K."/>
            <person name="Oshima T."/>
            <person name="Aiba H."/>
            <person name="Utsumi R."/>
            <person name="Ishihama A."/>
        </authorList>
    </citation>
    <scope>PHOSPHORYLATION</scope>
    <source>
        <strain>K12 / W3110 / ATCC 27325 / DSM 5911</strain>
    </source>
</reference>
<reference key="9">
    <citation type="journal article" date="2009" name="Mol. Microbiol.">
        <title>Dual control by perfectly overlapping sigma 54- and sigma 70-promoters adjusts small RNA GlmY expression to different environmental signals.</title>
        <authorList>
            <person name="Reichenbach B."/>
            <person name="Gopel Y."/>
            <person name="Gorke B."/>
        </authorList>
    </citation>
    <scope>FUNCTION</scope>
    <scope>DNA-BINDING</scope>
    <scope>DISRUPTION PHENOTYPE</scope>
    <scope>GENE NAME</scope>
</reference>
<keyword id="KW-0067">ATP-binding</keyword>
<keyword id="KW-0963">Cytoplasm</keyword>
<keyword id="KW-0238">DNA-binding</keyword>
<keyword id="KW-0547">Nucleotide-binding</keyword>
<keyword id="KW-0597">Phosphoprotein</keyword>
<keyword id="KW-1185">Reference proteome</keyword>
<keyword id="KW-0804">Transcription</keyword>
<keyword id="KW-0805">Transcription regulation</keyword>
<keyword id="KW-0902">Two-component regulatory system</keyword>
<gene>
    <name type="primary">glrR</name>
    <name type="synonym">yfhA</name>
    <name type="ordered locus">b2554</name>
    <name type="ordered locus">JW2538</name>
</gene>
<comment type="function">
    <text evidence="5">Member of the two-component regulatory system GlrR/GlrK that up-regulates transcription of the glmY sRNA when cells enter the stationary growth phase. Regulates glmY transcription by binding to three conserved sites in the purL-glmY intergenic region.</text>
</comment>
<comment type="subcellular location">
    <subcellularLocation>
        <location evidence="6">Cytoplasm</location>
    </subcellularLocation>
</comment>
<comment type="PTM">
    <text evidence="4">Phosphorylated by GlrK.</text>
</comment>
<comment type="disruption phenotype">
    <text evidence="5">Mutants show decreased amounts of glmY.</text>
</comment>
<comment type="miscellaneous">
    <text>Not required for the regulation of the glmY-glmZ-glmS regulatory cascade by glucosamine-6-phosphate depletion.</text>
</comment>
<comment type="sequence caution" evidence="6">
    <conflict type="erroneous initiation">
        <sequence resource="EMBL-CDS" id="AAA79816"/>
    </conflict>
</comment>
<organism>
    <name type="scientific">Escherichia coli (strain K12)</name>
    <dbReference type="NCBI Taxonomy" id="83333"/>
    <lineage>
        <taxon>Bacteria</taxon>
        <taxon>Pseudomonadati</taxon>
        <taxon>Pseudomonadota</taxon>
        <taxon>Gammaproteobacteria</taxon>
        <taxon>Enterobacterales</taxon>
        <taxon>Enterobacteriaceae</taxon>
        <taxon>Escherichia</taxon>
    </lineage>
</organism>
<proteinExistence type="evidence at protein level"/>
<evidence type="ECO:0000255" key="1"/>
<evidence type="ECO:0000255" key="2">
    <source>
        <dbReference type="PROSITE-ProRule" id="PRU00169"/>
    </source>
</evidence>
<evidence type="ECO:0000255" key="3">
    <source>
        <dbReference type="PROSITE-ProRule" id="PRU00193"/>
    </source>
</evidence>
<evidence type="ECO:0000269" key="4">
    <source>
    </source>
</evidence>
<evidence type="ECO:0000269" key="5">
    <source>
    </source>
</evidence>
<evidence type="ECO:0000305" key="6"/>
<feature type="chain" id="PRO_0000081377" description="Transcriptional regulatory protein GlrR">
    <location>
        <begin position="1"/>
        <end position="444"/>
    </location>
</feature>
<feature type="domain" description="Response regulatory" evidence="2">
    <location>
        <begin position="7"/>
        <end position="121"/>
    </location>
</feature>
<feature type="domain" description="Sigma-54 factor interaction" evidence="3">
    <location>
        <begin position="136"/>
        <end position="366"/>
    </location>
</feature>
<feature type="DNA-binding region" description="H-T-H motif" evidence="1">
    <location>
        <begin position="414"/>
        <end position="433"/>
    </location>
</feature>
<feature type="binding site" evidence="3">
    <location>
        <begin position="164"/>
        <end position="171"/>
    </location>
    <ligand>
        <name>ATP</name>
        <dbReference type="ChEBI" id="CHEBI:30616"/>
    </ligand>
</feature>
<feature type="binding site" evidence="3">
    <location>
        <begin position="227"/>
        <end position="236"/>
    </location>
    <ligand>
        <name>ATP</name>
        <dbReference type="ChEBI" id="CHEBI:30616"/>
    </ligand>
</feature>
<feature type="modified residue" description="4-aspartylphosphate" evidence="2">
    <location>
        <position position="56"/>
    </location>
</feature>
<feature type="sequence conflict" description="In Ref. 1; AAB28778." evidence="6" ref="1">
    <original>K</original>
    <variation>N</variation>
    <location>
        <position position="106"/>
    </location>
</feature>
<feature type="sequence conflict" description="In Ref. 1; AAB28778." evidence="6" ref="1">
    <original>ER</original>
    <variation>DG</variation>
    <location>
        <begin position="309"/>
        <end position="310"/>
    </location>
</feature>
<feature type="sequence conflict" description="In Ref. 1; AAB28778." evidence="6" ref="1">
    <original>ER</original>
    <variation>DG</variation>
    <location>
        <begin position="327"/>
        <end position="328"/>
    </location>
</feature>
<dbReference type="EMBL" id="S67014">
    <property type="protein sequence ID" value="AAB28778.1"/>
    <property type="molecule type" value="Genomic_DNA"/>
</dbReference>
<dbReference type="EMBL" id="U00096">
    <property type="protein sequence ID" value="AAC75607.1"/>
    <property type="molecule type" value="Genomic_DNA"/>
</dbReference>
<dbReference type="EMBL" id="AP009048">
    <property type="protein sequence ID" value="BAA16462.1"/>
    <property type="molecule type" value="Genomic_DNA"/>
</dbReference>
<dbReference type="EMBL" id="Z21843">
    <property type="protein sequence ID" value="CAA79889.1"/>
    <property type="molecule type" value="Genomic_DNA"/>
</dbReference>
<dbReference type="EMBL" id="M16778">
    <property type="status" value="NOT_ANNOTATED_CDS"/>
    <property type="molecule type" value="Genomic_DNA"/>
</dbReference>
<dbReference type="EMBL" id="U36841">
    <property type="protein sequence ID" value="AAA79816.1"/>
    <property type="status" value="ALT_INIT"/>
    <property type="molecule type" value="Genomic_DNA"/>
</dbReference>
<dbReference type="PIR" id="A65033">
    <property type="entry name" value="A65033"/>
</dbReference>
<dbReference type="RefSeq" id="NP_417049.1">
    <property type="nucleotide sequence ID" value="NC_000913.3"/>
</dbReference>
<dbReference type="RefSeq" id="WP_001295369.1">
    <property type="nucleotide sequence ID" value="NZ_LN832404.1"/>
</dbReference>
<dbReference type="SMR" id="P0AFU4"/>
<dbReference type="BioGRID" id="4259202">
    <property type="interactions" value="117"/>
</dbReference>
<dbReference type="BioGRID" id="851381">
    <property type="interactions" value="2"/>
</dbReference>
<dbReference type="DIP" id="DIP-12044N"/>
<dbReference type="FunCoup" id="P0AFU4">
    <property type="interactions" value="291"/>
</dbReference>
<dbReference type="IntAct" id="P0AFU4">
    <property type="interactions" value="9"/>
</dbReference>
<dbReference type="STRING" id="511145.b2554"/>
<dbReference type="iPTMnet" id="P0AFU4"/>
<dbReference type="jPOST" id="P0AFU4"/>
<dbReference type="PaxDb" id="511145-b2554"/>
<dbReference type="EnsemblBacteria" id="AAC75607">
    <property type="protein sequence ID" value="AAC75607"/>
    <property type="gene ID" value="b2554"/>
</dbReference>
<dbReference type="GeneID" id="93774581"/>
<dbReference type="GeneID" id="947042"/>
<dbReference type="KEGG" id="ecj:JW2538"/>
<dbReference type="KEGG" id="eco:b2554"/>
<dbReference type="KEGG" id="ecoc:C3026_14140"/>
<dbReference type="PATRIC" id="fig|1411691.4.peg.4180"/>
<dbReference type="EchoBASE" id="EB1262"/>
<dbReference type="eggNOG" id="COG2204">
    <property type="taxonomic scope" value="Bacteria"/>
</dbReference>
<dbReference type="HOGENOM" id="CLU_000445_0_6_6"/>
<dbReference type="InParanoid" id="P0AFU4"/>
<dbReference type="OMA" id="DRNRTEF"/>
<dbReference type="OrthoDB" id="9804019at2"/>
<dbReference type="PhylomeDB" id="P0AFU4"/>
<dbReference type="BioCyc" id="EcoCyc:EG11285-MONOMER"/>
<dbReference type="PRO" id="PR:P0AFU4"/>
<dbReference type="Proteomes" id="UP000000625">
    <property type="component" value="Chromosome"/>
</dbReference>
<dbReference type="GO" id="GO:0005737">
    <property type="term" value="C:cytoplasm"/>
    <property type="evidence" value="ECO:0007669"/>
    <property type="project" value="UniProtKB-SubCell"/>
</dbReference>
<dbReference type="GO" id="GO:0032993">
    <property type="term" value="C:protein-DNA complex"/>
    <property type="evidence" value="ECO:0000318"/>
    <property type="project" value="GO_Central"/>
</dbReference>
<dbReference type="GO" id="GO:0005524">
    <property type="term" value="F:ATP binding"/>
    <property type="evidence" value="ECO:0007669"/>
    <property type="project" value="UniProtKB-KW"/>
</dbReference>
<dbReference type="GO" id="GO:0016887">
    <property type="term" value="F:ATP hydrolysis activity"/>
    <property type="evidence" value="ECO:0007669"/>
    <property type="project" value="InterPro"/>
</dbReference>
<dbReference type="GO" id="GO:0000987">
    <property type="term" value="F:cis-regulatory region sequence-specific DNA binding"/>
    <property type="evidence" value="ECO:0000314"/>
    <property type="project" value="EcoCyc"/>
</dbReference>
<dbReference type="GO" id="GO:0001216">
    <property type="term" value="F:DNA-binding transcription activator activity"/>
    <property type="evidence" value="ECO:0000318"/>
    <property type="project" value="GO_Central"/>
</dbReference>
<dbReference type="GO" id="GO:0003700">
    <property type="term" value="F:DNA-binding transcription factor activity"/>
    <property type="evidence" value="ECO:0000314"/>
    <property type="project" value="EcoCyc"/>
</dbReference>
<dbReference type="GO" id="GO:0000156">
    <property type="term" value="F:phosphorelay response regulator activity"/>
    <property type="evidence" value="ECO:0000315"/>
    <property type="project" value="EcoCyc"/>
</dbReference>
<dbReference type="GO" id="GO:0006351">
    <property type="term" value="P:DNA-templated transcription"/>
    <property type="evidence" value="ECO:0000314"/>
    <property type="project" value="EcoCyc"/>
</dbReference>
<dbReference type="GO" id="GO:0000160">
    <property type="term" value="P:phosphorelay signal transduction system"/>
    <property type="evidence" value="ECO:0000315"/>
    <property type="project" value="EcoCyc"/>
</dbReference>
<dbReference type="GO" id="GO:0045893">
    <property type="term" value="P:positive regulation of DNA-templated transcription"/>
    <property type="evidence" value="ECO:0000315"/>
    <property type="project" value="EcoCyc"/>
</dbReference>
<dbReference type="CDD" id="cd00009">
    <property type="entry name" value="AAA"/>
    <property type="match status" value="1"/>
</dbReference>
<dbReference type="FunFam" id="3.40.50.300:FF:000006">
    <property type="entry name" value="DNA-binding transcriptional regulator NtrC"/>
    <property type="match status" value="1"/>
</dbReference>
<dbReference type="FunFam" id="3.40.50.2300:FF:000167">
    <property type="entry name" value="Two-component response regulator GlrR"/>
    <property type="match status" value="1"/>
</dbReference>
<dbReference type="FunFam" id="1.10.10.60:FF:000111">
    <property type="entry name" value="Two-component system response regulator GlrR"/>
    <property type="match status" value="1"/>
</dbReference>
<dbReference type="FunFam" id="1.10.8.60:FF:000034">
    <property type="entry name" value="Two-component system response regulator GlrR"/>
    <property type="match status" value="1"/>
</dbReference>
<dbReference type="Gene3D" id="1.10.8.60">
    <property type="match status" value="1"/>
</dbReference>
<dbReference type="Gene3D" id="3.40.50.2300">
    <property type="match status" value="1"/>
</dbReference>
<dbReference type="Gene3D" id="1.10.10.60">
    <property type="entry name" value="Homeodomain-like"/>
    <property type="match status" value="1"/>
</dbReference>
<dbReference type="Gene3D" id="3.40.50.300">
    <property type="entry name" value="P-loop containing nucleotide triphosphate hydrolases"/>
    <property type="match status" value="1"/>
</dbReference>
<dbReference type="InterPro" id="IPR003593">
    <property type="entry name" value="AAA+_ATPase"/>
</dbReference>
<dbReference type="InterPro" id="IPR011006">
    <property type="entry name" value="CheY-like_superfamily"/>
</dbReference>
<dbReference type="InterPro" id="IPR009057">
    <property type="entry name" value="Homeodomain-like_sf"/>
</dbReference>
<dbReference type="InterPro" id="IPR027417">
    <property type="entry name" value="P-loop_NTPase"/>
</dbReference>
<dbReference type="InterPro" id="IPR001789">
    <property type="entry name" value="Sig_transdc_resp-reg_receiver"/>
</dbReference>
<dbReference type="InterPro" id="IPR002078">
    <property type="entry name" value="Sigma_54_int"/>
</dbReference>
<dbReference type="InterPro" id="IPR025662">
    <property type="entry name" value="Sigma_54_int_dom_ATP-bd_1"/>
</dbReference>
<dbReference type="InterPro" id="IPR025943">
    <property type="entry name" value="Sigma_54_int_dom_ATP-bd_2"/>
</dbReference>
<dbReference type="InterPro" id="IPR025944">
    <property type="entry name" value="Sigma_54_int_dom_CS"/>
</dbReference>
<dbReference type="NCBIfam" id="NF011695">
    <property type="entry name" value="PRK15115.1"/>
    <property type="match status" value="1"/>
</dbReference>
<dbReference type="PANTHER" id="PTHR32071">
    <property type="entry name" value="TRANSCRIPTIONAL REGULATORY PROTEIN"/>
    <property type="match status" value="1"/>
</dbReference>
<dbReference type="PANTHER" id="PTHR32071:SF116">
    <property type="entry name" value="TRANSCRIPTIONAL REGULATORY PROTEIN GLRR"/>
    <property type="match status" value="1"/>
</dbReference>
<dbReference type="Pfam" id="PF00072">
    <property type="entry name" value="Response_reg"/>
    <property type="match status" value="1"/>
</dbReference>
<dbReference type="Pfam" id="PF00158">
    <property type="entry name" value="Sigma54_activat"/>
    <property type="match status" value="1"/>
</dbReference>
<dbReference type="SMART" id="SM00382">
    <property type="entry name" value="AAA"/>
    <property type="match status" value="1"/>
</dbReference>
<dbReference type="SMART" id="SM00448">
    <property type="entry name" value="REC"/>
    <property type="match status" value="1"/>
</dbReference>
<dbReference type="SUPFAM" id="SSF52172">
    <property type="entry name" value="CheY-like"/>
    <property type="match status" value="1"/>
</dbReference>
<dbReference type="SUPFAM" id="SSF46689">
    <property type="entry name" value="Homeodomain-like"/>
    <property type="match status" value="1"/>
</dbReference>
<dbReference type="SUPFAM" id="SSF52540">
    <property type="entry name" value="P-loop containing nucleoside triphosphate hydrolases"/>
    <property type="match status" value="1"/>
</dbReference>
<dbReference type="PROSITE" id="PS50110">
    <property type="entry name" value="RESPONSE_REGULATORY"/>
    <property type="match status" value="1"/>
</dbReference>
<dbReference type="PROSITE" id="PS00675">
    <property type="entry name" value="SIGMA54_INTERACT_1"/>
    <property type="match status" value="1"/>
</dbReference>
<dbReference type="PROSITE" id="PS00676">
    <property type="entry name" value="SIGMA54_INTERACT_2"/>
    <property type="match status" value="1"/>
</dbReference>
<dbReference type="PROSITE" id="PS00688">
    <property type="entry name" value="SIGMA54_INTERACT_3"/>
    <property type="match status" value="1"/>
</dbReference>
<dbReference type="PROSITE" id="PS50045">
    <property type="entry name" value="SIGMA54_INTERACT_4"/>
    <property type="match status" value="1"/>
</dbReference>